<organism>
    <name type="scientific">Methanopyrus kandleri (strain AV19 / DSM 6324 / JCM 9639 / NBRC 100938)</name>
    <dbReference type="NCBI Taxonomy" id="190192"/>
    <lineage>
        <taxon>Archaea</taxon>
        <taxon>Methanobacteriati</taxon>
        <taxon>Methanobacteriota</taxon>
        <taxon>Methanomada group</taxon>
        <taxon>Methanopyri</taxon>
        <taxon>Methanopyrales</taxon>
        <taxon>Methanopyraceae</taxon>
        <taxon>Methanopyrus</taxon>
    </lineage>
</organism>
<dbReference type="EMBL" id="AE009439">
    <property type="protein sequence ID" value="AAM01445.1"/>
    <property type="molecule type" value="Genomic_DNA"/>
</dbReference>
<dbReference type="RefSeq" id="WP_011018600.1">
    <property type="nucleotide sequence ID" value="NC_003551.1"/>
</dbReference>
<dbReference type="SMR" id="Q8TYR4"/>
<dbReference type="FunCoup" id="Q8TYR4">
    <property type="interactions" value="46"/>
</dbReference>
<dbReference type="STRING" id="190192.MK0228"/>
<dbReference type="PaxDb" id="190192-MK0228"/>
<dbReference type="EnsemblBacteria" id="AAM01445">
    <property type="protein sequence ID" value="AAM01445"/>
    <property type="gene ID" value="MK0228"/>
</dbReference>
<dbReference type="GeneID" id="1477531"/>
<dbReference type="KEGG" id="mka:MK0228"/>
<dbReference type="HOGENOM" id="CLU_111362_3_0_2"/>
<dbReference type="InParanoid" id="Q8TYR4"/>
<dbReference type="OrthoDB" id="8831at2157"/>
<dbReference type="Proteomes" id="UP000001826">
    <property type="component" value="Chromosome"/>
</dbReference>
<dbReference type="GO" id="GO:0005509">
    <property type="term" value="F:calcium ion binding"/>
    <property type="evidence" value="ECO:0007669"/>
    <property type="project" value="UniProtKB-UniRule"/>
</dbReference>
<dbReference type="GO" id="GO:0006388">
    <property type="term" value="P:tRNA splicing, via endonucleolytic cleavage and ligation"/>
    <property type="evidence" value="ECO:0007669"/>
    <property type="project" value="UniProtKB-UniRule"/>
</dbReference>
<dbReference type="Gene3D" id="3.55.10.10">
    <property type="entry name" value="Archease domain"/>
    <property type="match status" value="1"/>
</dbReference>
<dbReference type="HAMAP" id="MF_01222">
    <property type="entry name" value="Archease_arch"/>
    <property type="match status" value="1"/>
</dbReference>
<dbReference type="InterPro" id="IPR002804">
    <property type="entry name" value="Archease"/>
</dbReference>
<dbReference type="InterPro" id="IPR022952">
    <property type="entry name" value="Archease_arc"/>
</dbReference>
<dbReference type="InterPro" id="IPR023572">
    <property type="entry name" value="Archease_dom"/>
</dbReference>
<dbReference type="InterPro" id="IPR036820">
    <property type="entry name" value="Archease_dom_sf"/>
</dbReference>
<dbReference type="NCBIfam" id="NF001617">
    <property type="entry name" value="PRK00407.1"/>
    <property type="match status" value="1"/>
</dbReference>
<dbReference type="PANTHER" id="PTHR12682">
    <property type="entry name" value="ARCHEASE"/>
    <property type="match status" value="1"/>
</dbReference>
<dbReference type="PANTHER" id="PTHR12682:SF11">
    <property type="entry name" value="PROTEIN ARCHEASE"/>
    <property type="match status" value="1"/>
</dbReference>
<dbReference type="Pfam" id="PF01951">
    <property type="entry name" value="Archease"/>
    <property type="match status" value="1"/>
</dbReference>
<dbReference type="SUPFAM" id="SSF69819">
    <property type="entry name" value="MTH1598-like"/>
    <property type="match status" value="1"/>
</dbReference>
<proteinExistence type="inferred from homology"/>
<evidence type="ECO:0000250" key="1"/>
<evidence type="ECO:0000255" key="2">
    <source>
        <dbReference type="HAMAP-Rule" id="MF_01222"/>
    </source>
</evidence>
<keyword id="KW-0106">Calcium</keyword>
<keyword id="KW-0479">Metal-binding</keyword>
<keyword id="KW-1185">Reference proteome</keyword>
<keyword id="KW-0819">tRNA processing</keyword>
<protein>
    <recommendedName>
        <fullName evidence="2">Protein archease</fullName>
    </recommendedName>
</protein>
<name>ARCH_METKA</name>
<reference key="1">
    <citation type="journal article" date="2002" name="Proc. Natl. Acad. Sci. U.S.A.">
        <title>The complete genome of hyperthermophile Methanopyrus kandleri AV19 and monophyly of archaeal methanogens.</title>
        <authorList>
            <person name="Slesarev A.I."/>
            <person name="Mezhevaya K.V."/>
            <person name="Makarova K.S."/>
            <person name="Polushin N.N."/>
            <person name="Shcherbinina O.V."/>
            <person name="Shakhova V.V."/>
            <person name="Belova G.I."/>
            <person name="Aravind L."/>
            <person name="Natale D.A."/>
            <person name="Rogozin I.B."/>
            <person name="Tatusov R.L."/>
            <person name="Wolf Y.I."/>
            <person name="Stetter K.O."/>
            <person name="Malykh A.G."/>
            <person name="Koonin E.V."/>
            <person name="Kozyavkin S.A."/>
        </authorList>
    </citation>
    <scope>NUCLEOTIDE SEQUENCE [LARGE SCALE GENOMIC DNA]</scope>
    <source>
        <strain>AV19 / DSM 6324 / JCM 9639 / NBRC 100938</strain>
    </source>
</reference>
<comment type="function">
    <text evidence="1">Activates the tRNA-splicing ligase complex by facilitating the enzymatic turnover of catalytic subunit RtcB. Acts by promoting the guanylylation of RtcB, a key intermediate step in tRNA ligation. Can also alter the NTP specificity of RtcB such that ATP, dGTP or ITP is used efficiently (By similarity).</text>
</comment>
<comment type="similarity">
    <text evidence="2">Belongs to the archease family.</text>
</comment>
<gene>
    <name type="ordered locus">MK0228</name>
</gene>
<feature type="chain" id="PRO_0000068844" description="Protein archease">
    <location>
        <begin position="1"/>
        <end position="140"/>
    </location>
</feature>
<feature type="binding site" evidence="1">
    <location>
        <position position="11"/>
    </location>
    <ligand>
        <name>Ca(2+)</name>
        <dbReference type="ChEBI" id="CHEBI:29108"/>
    </ligand>
</feature>
<feature type="binding site" evidence="1">
    <location>
        <position position="139"/>
    </location>
    <ligand>
        <name>Ca(2+)</name>
        <dbReference type="ChEBI" id="CHEBI:29108"/>
    </ligand>
</feature>
<feature type="binding site" evidence="1">
    <location>
        <position position="140"/>
    </location>
    <ligand>
        <name>Ca(2+)</name>
        <dbReference type="ChEBI" id="CHEBI:29108"/>
    </ligand>
</feature>
<sequence length="140" mass="16358">MPWEEIEHTADAAFRVWADTPEDLLVEAAKALFDLITDLDAVEPEEEVEIEAEGGDLVELLHDWLEEIHFRHEIDGMLFSDFEVKELKKEEGWKVRGVARGEPYDPDRHPFHTEVKAVTYHNMKVEREDGRWVAEYVVDL</sequence>
<accession>Q8TYR4</accession>